<geneLocation type="chloroplast"/>
<reference key="1">
    <citation type="submission" date="2000-02" db="EMBL/GenBank/DDBJ databases">
        <title>Long branches in the seed plants and the root of the angiosperms.</title>
        <authorList>
            <person name="Graham S.W."/>
            <person name="Reeves P.A."/>
            <person name="Burns A."/>
            <person name="Olmstead R.G."/>
        </authorList>
    </citation>
    <scope>NUCLEOTIDE SEQUENCE [GENOMIC DNA]</scope>
</reference>
<evidence type="ECO:0000255" key="1">
    <source>
        <dbReference type="HAMAP-Rule" id="MF_00808"/>
    </source>
</evidence>
<dbReference type="EMBL" id="AY007471">
    <property type="protein sequence ID" value="AAG12396.1"/>
    <property type="molecule type" value="Genomic_DNA"/>
</dbReference>
<dbReference type="SMR" id="Q8HS12"/>
<dbReference type="GO" id="GO:0009535">
    <property type="term" value="C:chloroplast thylakoid membrane"/>
    <property type="evidence" value="ECO:0007669"/>
    <property type="project" value="UniProtKB-SubCell"/>
</dbReference>
<dbReference type="GO" id="GO:0009539">
    <property type="term" value="C:photosystem II reaction center"/>
    <property type="evidence" value="ECO:0007669"/>
    <property type="project" value="InterPro"/>
</dbReference>
<dbReference type="GO" id="GO:0015979">
    <property type="term" value="P:photosynthesis"/>
    <property type="evidence" value="ECO:0007669"/>
    <property type="project" value="UniProtKB-UniRule"/>
</dbReference>
<dbReference type="HAMAP" id="MF_00808">
    <property type="entry name" value="PSII_PsbT"/>
    <property type="match status" value="1"/>
</dbReference>
<dbReference type="InterPro" id="IPR001743">
    <property type="entry name" value="PSII_PsbT"/>
</dbReference>
<dbReference type="InterPro" id="IPR037268">
    <property type="entry name" value="PSII_PsbT_sf"/>
</dbReference>
<dbReference type="PANTHER" id="PTHR36411">
    <property type="match status" value="1"/>
</dbReference>
<dbReference type="PANTHER" id="PTHR36411:SF2">
    <property type="entry name" value="PHOTOSYSTEM II REACTION CENTER PROTEIN T"/>
    <property type="match status" value="1"/>
</dbReference>
<dbReference type="Pfam" id="PF01405">
    <property type="entry name" value="PsbT"/>
    <property type="match status" value="1"/>
</dbReference>
<dbReference type="SUPFAM" id="SSF161029">
    <property type="entry name" value="Photosystem II reaction center protein T, PsbT"/>
    <property type="match status" value="1"/>
</dbReference>
<keyword id="KW-0150">Chloroplast</keyword>
<keyword id="KW-0472">Membrane</keyword>
<keyword id="KW-0602">Photosynthesis</keyword>
<keyword id="KW-0604">Photosystem II</keyword>
<keyword id="KW-0934">Plastid</keyword>
<keyword id="KW-0793">Thylakoid</keyword>
<keyword id="KW-0812">Transmembrane</keyword>
<keyword id="KW-1133">Transmembrane helix</keyword>
<gene>
    <name evidence="1" type="primary">psbT</name>
</gene>
<protein>
    <recommendedName>
        <fullName evidence="1">Photosystem II reaction center protein T</fullName>
        <shortName evidence="1">PSII-T</shortName>
    </recommendedName>
</protein>
<sequence length="35" mass="4077">MEALVYTFLLVSTLGIIFFAIFFREPPKVPTKKMK</sequence>
<name>PSBT_SPAWA</name>
<accession>Q8HS12</accession>
<comment type="function">
    <text evidence="1">Found at the monomer-monomer interface of the photosystem II (PS II) dimer, plays a role in assembly and dimerization of PSII. PSII is a light-driven water plastoquinone oxidoreductase, using light energy to abstract electrons from H(2)O, generating a proton gradient subsequently used for ATP formation.</text>
</comment>
<comment type="subunit">
    <text evidence="1">PSII is composed of 1 copy each of membrane proteins PsbA, PsbB, PsbC, PsbD, PsbE, PsbF, PsbH, PsbI, PsbJ, PsbK, PsbL, PsbM, PsbT, PsbY, PsbZ, Psb30/Ycf12, at least 3 peripheral proteins of the oxygen-evolving complex and a large number of cofactors. It forms dimeric complexes.</text>
</comment>
<comment type="subcellular location">
    <subcellularLocation>
        <location evidence="1">Plastid</location>
        <location evidence="1">Chloroplast thylakoid membrane</location>
        <topology evidence="1">Single-pass membrane protein</topology>
    </subcellularLocation>
</comment>
<comment type="similarity">
    <text evidence="1">Belongs to the PsbT family.</text>
</comment>
<organism>
    <name type="scientific">Spathiphyllum wallisii</name>
    <name type="common">Peace lily</name>
    <dbReference type="NCBI Taxonomy" id="85269"/>
    <lineage>
        <taxon>Eukaryota</taxon>
        <taxon>Viridiplantae</taxon>
        <taxon>Streptophyta</taxon>
        <taxon>Embryophyta</taxon>
        <taxon>Tracheophyta</taxon>
        <taxon>Spermatophyta</taxon>
        <taxon>Magnoliopsida</taxon>
        <taxon>Liliopsida</taxon>
        <taxon>Araceae</taxon>
        <taxon>Pothoideae</taxon>
        <taxon>Monstereae</taxon>
        <taxon>Spathiphyllum</taxon>
    </lineage>
</organism>
<feature type="chain" id="PRO_0000217983" description="Photosystem II reaction center protein T">
    <location>
        <begin position="1"/>
        <end position="35"/>
    </location>
</feature>
<feature type="transmembrane region" description="Helical" evidence="1">
    <location>
        <begin position="3"/>
        <end position="23"/>
    </location>
</feature>
<proteinExistence type="inferred from homology"/>